<proteinExistence type="inferred from homology"/>
<name>PYRR_CLOBA</name>
<evidence type="ECO:0000255" key="1">
    <source>
        <dbReference type="HAMAP-Rule" id="MF_01219"/>
    </source>
</evidence>
<protein>
    <recommendedName>
        <fullName evidence="1">Bifunctional protein PyrR</fullName>
    </recommendedName>
    <domain>
        <recommendedName>
            <fullName evidence="1">Pyrimidine operon regulatory protein</fullName>
        </recommendedName>
    </domain>
    <domain>
        <recommendedName>
            <fullName evidence="1">Uracil phosphoribosyltransferase</fullName>
            <shortName evidence="1">UPRTase</shortName>
            <ecNumber evidence="1">2.4.2.9</ecNumber>
        </recommendedName>
    </domain>
</protein>
<reference key="1">
    <citation type="submission" date="2008-05" db="EMBL/GenBank/DDBJ databases">
        <title>Complete genome sequence of Clostridium botulinum E3 str. Alaska E43.</title>
        <authorList>
            <person name="Brinkac L.M."/>
            <person name="Brown J.L."/>
            <person name="Bruce D."/>
            <person name="Detter C."/>
            <person name="Munk C."/>
            <person name="Smith L.A."/>
            <person name="Smith T.J."/>
            <person name="Sutton G."/>
            <person name="Brettin T.S."/>
        </authorList>
    </citation>
    <scope>NUCLEOTIDE SEQUENCE [LARGE SCALE GENOMIC DNA]</scope>
    <source>
        <strain>Alaska E43 / Type E3</strain>
    </source>
</reference>
<sequence length="180" mass="20369">MELKSTLLDDKAIKRTLIRISHEIIERNKGVEDIVLIGIKRRGYPLAQRIADQIEGIEGRKVDVGYVDITLYRDDLTIVEKDPTVKSIDIETSIKDKKVILVDDVLYTCRTVRAAIDAVMDLDRPEGIQLAVLIDRGHKELPIRADYVGKNIPTSKNEVIKVMLNEIDGEDSVKIYDSIN</sequence>
<feature type="chain" id="PRO_1000139189" description="Bifunctional protein PyrR">
    <location>
        <begin position="1"/>
        <end position="180"/>
    </location>
</feature>
<feature type="short sequence motif" description="PRPP-binding" evidence="1">
    <location>
        <begin position="99"/>
        <end position="111"/>
    </location>
</feature>
<organism>
    <name type="scientific">Clostridium botulinum (strain Alaska E43 / Type E3)</name>
    <dbReference type="NCBI Taxonomy" id="508767"/>
    <lineage>
        <taxon>Bacteria</taxon>
        <taxon>Bacillati</taxon>
        <taxon>Bacillota</taxon>
        <taxon>Clostridia</taxon>
        <taxon>Eubacteriales</taxon>
        <taxon>Clostridiaceae</taxon>
        <taxon>Clostridium</taxon>
    </lineage>
</organism>
<dbReference type="EC" id="2.4.2.9" evidence="1"/>
<dbReference type="EMBL" id="CP001078">
    <property type="protein sequence ID" value="ACD51063.1"/>
    <property type="molecule type" value="Genomic_DNA"/>
</dbReference>
<dbReference type="RefSeq" id="WP_012449503.1">
    <property type="nucleotide sequence ID" value="NC_010723.1"/>
</dbReference>
<dbReference type="SMR" id="B2V4U3"/>
<dbReference type="KEGG" id="cbt:CLH_2196"/>
<dbReference type="HOGENOM" id="CLU_094234_2_1_9"/>
<dbReference type="GO" id="GO:0003723">
    <property type="term" value="F:RNA binding"/>
    <property type="evidence" value="ECO:0007669"/>
    <property type="project" value="UniProtKB-UniRule"/>
</dbReference>
<dbReference type="GO" id="GO:0004845">
    <property type="term" value="F:uracil phosphoribosyltransferase activity"/>
    <property type="evidence" value="ECO:0007669"/>
    <property type="project" value="UniProtKB-UniRule"/>
</dbReference>
<dbReference type="GO" id="GO:0006353">
    <property type="term" value="P:DNA-templated transcription termination"/>
    <property type="evidence" value="ECO:0007669"/>
    <property type="project" value="UniProtKB-UniRule"/>
</dbReference>
<dbReference type="CDD" id="cd06223">
    <property type="entry name" value="PRTases_typeI"/>
    <property type="match status" value="1"/>
</dbReference>
<dbReference type="FunFam" id="3.40.50.2020:FF:000020">
    <property type="entry name" value="Bifunctional protein PyrR"/>
    <property type="match status" value="1"/>
</dbReference>
<dbReference type="Gene3D" id="3.40.50.2020">
    <property type="match status" value="1"/>
</dbReference>
<dbReference type="HAMAP" id="MF_01219">
    <property type="entry name" value="PyrR"/>
    <property type="match status" value="1"/>
</dbReference>
<dbReference type="InterPro" id="IPR000836">
    <property type="entry name" value="PRibTrfase_dom"/>
</dbReference>
<dbReference type="InterPro" id="IPR029057">
    <property type="entry name" value="PRTase-like"/>
</dbReference>
<dbReference type="InterPro" id="IPR023050">
    <property type="entry name" value="PyrR"/>
</dbReference>
<dbReference type="InterPro" id="IPR050137">
    <property type="entry name" value="PyrR_bifunctional"/>
</dbReference>
<dbReference type="NCBIfam" id="NF003548">
    <property type="entry name" value="PRK05205.1-4"/>
    <property type="match status" value="1"/>
</dbReference>
<dbReference type="NCBIfam" id="NF003549">
    <property type="entry name" value="PRK05205.1-5"/>
    <property type="match status" value="1"/>
</dbReference>
<dbReference type="PANTHER" id="PTHR11608">
    <property type="entry name" value="BIFUNCTIONAL PROTEIN PYRR"/>
    <property type="match status" value="1"/>
</dbReference>
<dbReference type="PANTHER" id="PTHR11608:SF0">
    <property type="entry name" value="BIFUNCTIONAL PROTEIN PYRR"/>
    <property type="match status" value="1"/>
</dbReference>
<dbReference type="Pfam" id="PF00156">
    <property type="entry name" value="Pribosyltran"/>
    <property type="match status" value="1"/>
</dbReference>
<dbReference type="SUPFAM" id="SSF53271">
    <property type="entry name" value="PRTase-like"/>
    <property type="match status" value="1"/>
</dbReference>
<comment type="function">
    <text evidence="1">Regulates transcriptional attenuation of the pyrimidine nucleotide (pyr) operon by binding in a uridine-dependent manner to specific sites on pyr mRNA. This disrupts an antiterminator hairpin in the RNA and favors formation of a downstream transcription terminator, leading to a reduced expression of downstream genes.</text>
</comment>
<comment type="function">
    <text evidence="1">Also displays a weak uracil phosphoribosyltransferase activity which is not physiologically significant.</text>
</comment>
<comment type="catalytic activity">
    <reaction evidence="1">
        <text>UMP + diphosphate = 5-phospho-alpha-D-ribose 1-diphosphate + uracil</text>
        <dbReference type="Rhea" id="RHEA:13017"/>
        <dbReference type="ChEBI" id="CHEBI:17568"/>
        <dbReference type="ChEBI" id="CHEBI:33019"/>
        <dbReference type="ChEBI" id="CHEBI:57865"/>
        <dbReference type="ChEBI" id="CHEBI:58017"/>
        <dbReference type="EC" id="2.4.2.9"/>
    </reaction>
</comment>
<comment type="subunit">
    <text evidence="1">Homodimer and homohexamer; in equilibrium.</text>
</comment>
<comment type="similarity">
    <text evidence="1">Belongs to the purine/pyrimidine phosphoribosyltransferase family. PyrR subfamily.</text>
</comment>
<gene>
    <name evidence="1" type="primary">pyrR</name>
    <name type="ordered locus">CLH_2196</name>
</gene>
<keyword id="KW-0328">Glycosyltransferase</keyword>
<keyword id="KW-0694">RNA-binding</keyword>
<keyword id="KW-0804">Transcription</keyword>
<keyword id="KW-0805">Transcription regulation</keyword>
<keyword id="KW-0806">Transcription termination</keyword>
<keyword id="KW-0808">Transferase</keyword>
<accession>B2V4U3</accession>